<comment type="function">
    <text evidence="1">Plays an essential role in toxin Tse6 delivery to target cells and specifically in the loading of Tse6 onto VgrG1a.</text>
</comment>
<comment type="subunit">
    <text evidence="1">Homodimer. Two dimers interact with Tse6; this interaction is crucial for Tse6 loading onto VgrG1a.</text>
</comment>
<keyword id="KW-0002">3D-structure</keyword>
<keyword id="KW-1185">Reference proteome</keyword>
<sequence length="144" mass="16488">MTLYRLHEADLEIPDAWQDQSINIFKLPASGPAREASFVISRDASQGDAPFADYVARQLENAEKQLPGFKLHKRWDINIHGHAAVLLDYQWQREGRDLMLRQVFIERRPAVLITTLTTTPADLPHHEPAWKQAMQTLVPRPTPS</sequence>
<name>EAGT6_PSEAE</name>
<gene>
    <name evidence="2" type="primary">eagT6</name>
    <name type="ordered locus">PA0094</name>
</gene>
<evidence type="ECO:0000269" key="1">
    <source>
    </source>
</evidence>
<evidence type="ECO:0000303" key="2">
    <source>
    </source>
</evidence>
<evidence type="ECO:0007744" key="3">
    <source>
        <dbReference type="PDB" id="1TU1"/>
    </source>
</evidence>
<evidence type="ECO:0007829" key="4">
    <source>
        <dbReference type="PDB" id="1TU1"/>
    </source>
</evidence>
<dbReference type="EMBL" id="AE004091">
    <property type="protein sequence ID" value="AAG03484.1"/>
    <property type="molecule type" value="Genomic_DNA"/>
</dbReference>
<dbReference type="PIR" id="C83633">
    <property type="entry name" value="C83633"/>
</dbReference>
<dbReference type="RefSeq" id="NP_248784.1">
    <property type="nucleotide sequence ID" value="NC_002516.2"/>
</dbReference>
<dbReference type="RefSeq" id="WP_003083692.1">
    <property type="nucleotide sequence ID" value="NZ_QZGE01000015.1"/>
</dbReference>
<dbReference type="PDB" id="1TU1">
    <property type="method" value="X-ray"/>
    <property type="resolution" value="1.95 A"/>
    <property type="chains" value="A/B=1-144"/>
</dbReference>
<dbReference type="PDB" id="6XRF">
    <property type="method" value="X-ray"/>
    <property type="resolution" value="2.56 A"/>
    <property type="chains" value="A/B/D/E/G/H=1-144"/>
</dbReference>
<dbReference type="PDBsum" id="1TU1"/>
<dbReference type="PDBsum" id="6XRF"/>
<dbReference type="EMDB" id="EMD-3113"/>
<dbReference type="SMR" id="Q9I738"/>
<dbReference type="STRING" id="208964.PA0094"/>
<dbReference type="PaxDb" id="208964-PA0094"/>
<dbReference type="DNASU" id="879595"/>
<dbReference type="GeneID" id="879595"/>
<dbReference type="KEGG" id="pae:PA0094"/>
<dbReference type="PATRIC" id="fig|208964.12.peg.98"/>
<dbReference type="PseudoCAP" id="PA0094"/>
<dbReference type="HOGENOM" id="CLU_126902_2_0_6"/>
<dbReference type="InParanoid" id="Q9I738"/>
<dbReference type="OrthoDB" id="8775251at2"/>
<dbReference type="BioCyc" id="PAER208964:G1FZ6-96-MONOMER"/>
<dbReference type="EvolutionaryTrace" id="Q9I738"/>
<dbReference type="Proteomes" id="UP000002438">
    <property type="component" value="Chromosome"/>
</dbReference>
<dbReference type="FunFam" id="3.40.1000.10:FF:000008">
    <property type="entry name" value="DUF1795 domain-containing protein"/>
    <property type="match status" value="1"/>
</dbReference>
<dbReference type="Gene3D" id="3.40.1000.10">
    <property type="entry name" value="Mog1/PsbP, alpha/beta/alpha sandwich"/>
    <property type="match status" value="1"/>
</dbReference>
<dbReference type="InterPro" id="IPR014894">
    <property type="entry name" value="DcrB/EagT6"/>
</dbReference>
<dbReference type="InterPro" id="IPR016123">
    <property type="entry name" value="Mog1/PsbP_a/b/a-sand"/>
</dbReference>
<dbReference type="Pfam" id="PF08786">
    <property type="entry name" value="DcrB"/>
    <property type="match status" value="1"/>
</dbReference>
<dbReference type="SUPFAM" id="SSF55724">
    <property type="entry name" value="Mog1p/PsbP-like"/>
    <property type="match status" value="1"/>
</dbReference>
<protein>
    <recommendedName>
        <fullName evidence="2">Effector EagT6</fullName>
    </recommendedName>
</protein>
<reference key="1">
    <citation type="journal article" date="2000" name="Nature">
        <title>Complete genome sequence of Pseudomonas aeruginosa PAO1, an opportunistic pathogen.</title>
        <authorList>
            <person name="Stover C.K."/>
            <person name="Pham X.-Q.T."/>
            <person name="Erwin A.L."/>
            <person name="Mizoguchi S.D."/>
            <person name="Warrener P."/>
            <person name="Hickey M.J."/>
            <person name="Brinkman F.S.L."/>
            <person name="Hufnagle W.O."/>
            <person name="Kowalik D.J."/>
            <person name="Lagrou M."/>
            <person name="Garber R.L."/>
            <person name="Goltry L."/>
            <person name="Tolentino E."/>
            <person name="Westbrock-Wadman S."/>
            <person name="Yuan Y."/>
            <person name="Brody L.L."/>
            <person name="Coulter S.N."/>
            <person name="Folger K.R."/>
            <person name="Kas A."/>
            <person name="Larbig K."/>
            <person name="Lim R.M."/>
            <person name="Smith K.A."/>
            <person name="Spencer D.H."/>
            <person name="Wong G.K.-S."/>
            <person name="Wu Z."/>
            <person name="Paulsen I.T."/>
            <person name="Reizer J."/>
            <person name="Saier M.H. Jr."/>
            <person name="Hancock R.E.W."/>
            <person name="Lory S."/>
            <person name="Olson M.V."/>
        </authorList>
    </citation>
    <scope>NUCLEOTIDE SEQUENCE [LARGE SCALE GENOMIC DNA]</scope>
    <source>
        <strain>ATCC 15692 / DSM 22644 / CIP 104116 / JCM 14847 / LMG 12228 / 1C / PRS 101 / PAO1</strain>
    </source>
</reference>
<reference key="2">
    <citation type="journal article" date="2018" name="Nat. Microbiol.">
        <title>Mechanism of loading and translocation of type VI secretion system effector Tse6.</title>
        <authorList>
            <person name="Quentin D."/>
            <person name="Ahmad S."/>
            <person name="Shanthamoorthy P."/>
            <person name="Mougous J.D."/>
            <person name="Whitney J.C."/>
            <person name="Raunser S."/>
        </authorList>
    </citation>
    <scope>FUNCTION</scope>
    <scope>INTERACTION WITH TSE6</scope>
    <scope>SUBUNIT</scope>
</reference>
<reference evidence="3" key="3">
    <citation type="submission" date="2004-06" db="PDB data bank">
        <title>X-ray crystal structure of hypothetical protein PA94 from Pseudomonas aeruginosa.</title>
        <authorList>
            <person name="Osipiuk J."/>
            <person name="Evdokimova E."/>
            <person name="Savchenko A."/>
            <person name="Edwards A."/>
            <person name="Cymborowski M."/>
            <person name="Minor W."/>
            <person name="Joachimiak A."/>
        </authorList>
    </citation>
    <scope>X-RAY CRYSTALLOGRAPHY (1.95 ANGSTROMS)</scope>
</reference>
<organism>
    <name type="scientific">Pseudomonas aeruginosa (strain ATCC 15692 / DSM 22644 / CIP 104116 / JCM 14847 / LMG 12228 / 1C / PRS 101 / PAO1)</name>
    <dbReference type="NCBI Taxonomy" id="208964"/>
    <lineage>
        <taxon>Bacteria</taxon>
        <taxon>Pseudomonadati</taxon>
        <taxon>Pseudomonadota</taxon>
        <taxon>Gammaproteobacteria</taxon>
        <taxon>Pseudomonadales</taxon>
        <taxon>Pseudomonadaceae</taxon>
        <taxon>Pseudomonas</taxon>
    </lineage>
</organism>
<accession>Q9I738</accession>
<proteinExistence type="evidence at protein level"/>
<feature type="chain" id="PRO_0000449105" description="Effector EagT6">
    <location>
        <begin position="1"/>
        <end position="144"/>
    </location>
</feature>
<feature type="strand" evidence="4">
    <location>
        <begin position="1"/>
        <end position="5"/>
    </location>
</feature>
<feature type="strand" evidence="4">
    <location>
        <begin position="7"/>
        <end position="14"/>
    </location>
</feature>
<feature type="strand" evidence="4">
    <location>
        <begin position="17"/>
        <end position="19"/>
    </location>
</feature>
<feature type="strand" evidence="4">
    <location>
        <begin position="22"/>
        <end position="27"/>
    </location>
</feature>
<feature type="strand" evidence="4">
    <location>
        <begin position="36"/>
        <end position="43"/>
    </location>
</feature>
<feature type="helix" evidence="4">
    <location>
        <begin position="51"/>
        <end position="65"/>
    </location>
</feature>
<feature type="strand" evidence="4">
    <location>
        <begin position="70"/>
        <end position="79"/>
    </location>
</feature>
<feature type="strand" evidence="4">
    <location>
        <begin position="82"/>
        <end position="93"/>
    </location>
</feature>
<feature type="strand" evidence="4">
    <location>
        <begin position="96"/>
        <end position="105"/>
    </location>
</feature>
<feature type="strand" evidence="4">
    <location>
        <begin position="108"/>
        <end position="118"/>
    </location>
</feature>
<feature type="helix" evidence="4">
    <location>
        <begin position="120"/>
        <end position="122"/>
    </location>
</feature>
<feature type="helix" evidence="4">
    <location>
        <begin position="123"/>
        <end position="135"/>
    </location>
</feature>